<keyword id="KW-0233">DNA recombination</keyword>
<keyword id="KW-0238">DNA-binding</keyword>
<keyword id="KW-1185">Reference proteome</keyword>
<keyword id="KW-0804">Transcription</keyword>
<keyword id="KW-0805">Transcription regulation</keyword>
<keyword id="KW-0810">Translation regulation</keyword>
<sequence length="99" mass="11149">MALTKAEMAEHLFETLGINKRVAKEMVESFFEEIREALESGEQVKLSGFGNFDLRDKNQRPGRNPKTGEDIPISARRVVTFRPGQKLKSRVEAANSGKK</sequence>
<evidence type="ECO:0000255" key="1">
    <source>
        <dbReference type="HAMAP-Rule" id="MF_00380"/>
    </source>
</evidence>
<evidence type="ECO:0000256" key="2">
    <source>
        <dbReference type="SAM" id="MobiDB-lite"/>
    </source>
</evidence>
<organism>
    <name type="scientific">Shewanella frigidimarina (strain NCIMB 400)</name>
    <dbReference type="NCBI Taxonomy" id="318167"/>
    <lineage>
        <taxon>Bacteria</taxon>
        <taxon>Pseudomonadati</taxon>
        <taxon>Pseudomonadota</taxon>
        <taxon>Gammaproteobacteria</taxon>
        <taxon>Alteromonadales</taxon>
        <taxon>Shewanellaceae</taxon>
        <taxon>Shewanella</taxon>
    </lineage>
</organism>
<protein>
    <recommendedName>
        <fullName evidence="1">Integration host factor subunit alpha</fullName>
        <shortName evidence="1">IHF-alpha</shortName>
    </recommendedName>
</protein>
<comment type="function">
    <text evidence="1">This protein is one of the two subunits of integration host factor, a specific DNA-binding protein that functions in genetic recombination as well as in transcriptional and translational control.</text>
</comment>
<comment type="subunit">
    <text evidence="1">Heterodimer of an alpha and a beta chain.</text>
</comment>
<comment type="similarity">
    <text evidence="1">Belongs to the bacterial histone-like protein family.</text>
</comment>
<name>IHFA_SHEFN</name>
<gene>
    <name evidence="1" type="primary">ihfA</name>
    <name evidence="1" type="synonym">himA</name>
    <name type="ordered locus">Sfri_1710</name>
</gene>
<reference key="1">
    <citation type="submission" date="2006-08" db="EMBL/GenBank/DDBJ databases">
        <title>Complete sequence of Shewanella frigidimarina NCIMB 400.</title>
        <authorList>
            <consortium name="US DOE Joint Genome Institute"/>
            <person name="Copeland A."/>
            <person name="Lucas S."/>
            <person name="Lapidus A."/>
            <person name="Barry K."/>
            <person name="Detter J.C."/>
            <person name="Glavina del Rio T."/>
            <person name="Hammon N."/>
            <person name="Israni S."/>
            <person name="Dalin E."/>
            <person name="Tice H."/>
            <person name="Pitluck S."/>
            <person name="Fredrickson J.K."/>
            <person name="Kolker E."/>
            <person name="McCuel L.A."/>
            <person name="DiChristina T."/>
            <person name="Nealson K.H."/>
            <person name="Newman D."/>
            <person name="Tiedje J.M."/>
            <person name="Zhou J."/>
            <person name="Romine M.F."/>
            <person name="Culley D.E."/>
            <person name="Serres M."/>
            <person name="Chertkov O."/>
            <person name="Brettin T."/>
            <person name="Bruce D."/>
            <person name="Han C."/>
            <person name="Tapia R."/>
            <person name="Gilna P."/>
            <person name="Schmutz J."/>
            <person name="Larimer F."/>
            <person name="Land M."/>
            <person name="Hauser L."/>
            <person name="Kyrpides N."/>
            <person name="Mikhailova N."/>
            <person name="Richardson P."/>
        </authorList>
    </citation>
    <scope>NUCLEOTIDE SEQUENCE [LARGE SCALE GENOMIC DNA]</scope>
    <source>
        <strain>NCIMB 400</strain>
    </source>
</reference>
<dbReference type="EMBL" id="CP000447">
    <property type="protein sequence ID" value="ABI71560.1"/>
    <property type="molecule type" value="Genomic_DNA"/>
</dbReference>
<dbReference type="RefSeq" id="WP_011637176.1">
    <property type="nucleotide sequence ID" value="NC_008345.1"/>
</dbReference>
<dbReference type="SMR" id="Q083K5"/>
<dbReference type="STRING" id="318167.Sfri_1710"/>
<dbReference type="GeneID" id="90570047"/>
<dbReference type="KEGG" id="sfr:Sfri_1710"/>
<dbReference type="eggNOG" id="COG0776">
    <property type="taxonomic scope" value="Bacteria"/>
</dbReference>
<dbReference type="HOGENOM" id="CLU_105066_1_3_6"/>
<dbReference type="OrthoDB" id="9797747at2"/>
<dbReference type="Proteomes" id="UP000000684">
    <property type="component" value="Chromosome"/>
</dbReference>
<dbReference type="GO" id="GO:0005829">
    <property type="term" value="C:cytosol"/>
    <property type="evidence" value="ECO:0007669"/>
    <property type="project" value="TreeGrafter"/>
</dbReference>
<dbReference type="GO" id="GO:0003677">
    <property type="term" value="F:DNA binding"/>
    <property type="evidence" value="ECO:0007669"/>
    <property type="project" value="UniProtKB-UniRule"/>
</dbReference>
<dbReference type="GO" id="GO:0030527">
    <property type="term" value="F:structural constituent of chromatin"/>
    <property type="evidence" value="ECO:0007669"/>
    <property type="project" value="InterPro"/>
</dbReference>
<dbReference type="GO" id="GO:0006310">
    <property type="term" value="P:DNA recombination"/>
    <property type="evidence" value="ECO:0007669"/>
    <property type="project" value="UniProtKB-UniRule"/>
</dbReference>
<dbReference type="GO" id="GO:0009893">
    <property type="term" value="P:positive regulation of metabolic process"/>
    <property type="evidence" value="ECO:0007669"/>
    <property type="project" value="UniProtKB-ARBA"/>
</dbReference>
<dbReference type="GO" id="GO:0006355">
    <property type="term" value="P:regulation of DNA-templated transcription"/>
    <property type="evidence" value="ECO:0007669"/>
    <property type="project" value="UniProtKB-UniRule"/>
</dbReference>
<dbReference type="GO" id="GO:0006417">
    <property type="term" value="P:regulation of translation"/>
    <property type="evidence" value="ECO:0007669"/>
    <property type="project" value="UniProtKB-UniRule"/>
</dbReference>
<dbReference type="CDD" id="cd13835">
    <property type="entry name" value="IHF_A"/>
    <property type="match status" value="1"/>
</dbReference>
<dbReference type="FunFam" id="4.10.520.10:FF:000002">
    <property type="entry name" value="Integration host factor subunit alpha"/>
    <property type="match status" value="1"/>
</dbReference>
<dbReference type="Gene3D" id="4.10.520.10">
    <property type="entry name" value="IHF-like DNA-binding proteins"/>
    <property type="match status" value="1"/>
</dbReference>
<dbReference type="HAMAP" id="MF_00380">
    <property type="entry name" value="IHF_alpha"/>
    <property type="match status" value="1"/>
</dbReference>
<dbReference type="InterPro" id="IPR000119">
    <property type="entry name" value="Hist_DNA-bd"/>
</dbReference>
<dbReference type="InterPro" id="IPR020816">
    <property type="entry name" value="Histone-like_DNA-bd_CS"/>
</dbReference>
<dbReference type="InterPro" id="IPR010992">
    <property type="entry name" value="IHF-like_DNA-bd_dom_sf"/>
</dbReference>
<dbReference type="InterPro" id="IPR005684">
    <property type="entry name" value="IHF_alpha"/>
</dbReference>
<dbReference type="NCBIfam" id="TIGR00987">
    <property type="entry name" value="himA"/>
    <property type="match status" value="1"/>
</dbReference>
<dbReference type="NCBIfam" id="NF001401">
    <property type="entry name" value="PRK00285.1"/>
    <property type="match status" value="1"/>
</dbReference>
<dbReference type="PANTHER" id="PTHR33175">
    <property type="entry name" value="DNA-BINDING PROTEIN HU"/>
    <property type="match status" value="1"/>
</dbReference>
<dbReference type="PANTHER" id="PTHR33175:SF2">
    <property type="entry name" value="INTEGRATION HOST FACTOR SUBUNIT ALPHA"/>
    <property type="match status" value="1"/>
</dbReference>
<dbReference type="Pfam" id="PF00216">
    <property type="entry name" value="Bac_DNA_binding"/>
    <property type="match status" value="1"/>
</dbReference>
<dbReference type="PRINTS" id="PR01727">
    <property type="entry name" value="DNABINDINGHU"/>
</dbReference>
<dbReference type="SMART" id="SM00411">
    <property type="entry name" value="BHL"/>
    <property type="match status" value="1"/>
</dbReference>
<dbReference type="SUPFAM" id="SSF47729">
    <property type="entry name" value="IHF-like DNA-binding proteins"/>
    <property type="match status" value="1"/>
</dbReference>
<dbReference type="PROSITE" id="PS00045">
    <property type="entry name" value="HISTONE_LIKE"/>
    <property type="match status" value="1"/>
</dbReference>
<proteinExistence type="inferred from homology"/>
<feature type="chain" id="PRO_0000277774" description="Integration host factor subunit alpha">
    <location>
        <begin position="1"/>
        <end position="99"/>
    </location>
</feature>
<feature type="region of interest" description="Disordered" evidence="2">
    <location>
        <begin position="49"/>
        <end position="71"/>
    </location>
</feature>
<accession>Q083K5</accession>